<organism>
    <name type="scientific">Pseudomonas syringae pv. syringae (strain B728a)</name>
    <dbReference type="NCBI Taxonomy" id="205918"/>
    <lineage>
        <taxon>Bacteria</taxon>
        <taxon>Pseudomonadati</taxon>
        <taxon>Pseudomonadota</taxon>
        <taxon>Gammaproteobacteria</taxon>
        <taxon>Pseudomonadales</taxon>
        <taxon>Pseudomonadaceae</taxon>
        <taxon>Pseudomonas</taxon>
        <taxon>Pseudomonas syringae</taxon>
    </lineage>
</organism>
<gene>
    <name evidence="1" type="primary">alaS</name>
    <name type="ordered locus">Psyr_3556</name>
</gene>
<dbReference type="EC" id="6.1.1.7" evidence="1"/>
<dbReference type="EMBL" id="CP000075">
    <property type="protein sequence ID" value="AAY38588.1"/>
    <property type="status" value="ALT_INIT"/>
    <property type="molecule type" value="Genomic_DNA"/>
</dbReference>
<dbReference type="RefSeq" id="WP_024642718.1">
    <property type="nucleotide sequence ID" value="NC_007005.1"/>
</dbReference>
<dbReference type="RefSeq" id="YP_236626.1">
    <property type="nucleotide sequence ID" value="NC_007005.1"/>
</dbReference>
<dbReference type="SMR" id="Q4ZQI4"/>
<dbReference type="STRING" id="205918.Psyr_3556"/>
<dbReference type="KEGG" id="psb:Psyr_3556"/>
<dbReference type="PATRIC" id="fig|205918.7.peg.3642"/>
<dbReference type="eggNOG" id="COG0013">
    <property type="taxonomic scope" value="Bacteria"/>
</dbReference>
<dbReference type="HOGENOM" id="CLU_004485_1_1_6"/>
<dbReference type="OrthoDB" id="9803884at2"/>
<dbReference type="Proteomes" id="UP000000426">
    <property type="component" value="Chromosome"/>
</dbReference>
<dbReference type="GO" id="GO:0005829">
    <property type="term" value="C:cytosol"/>
    <property type="evidence" value="ECO:0007669"/>
    <property type="project" value="TreeGrafter"/>
</dbReference>
<dbReference type="GO" id="GO:0004813">
    <property type="term" value="F:alanine-tRNA ligase activity"/>
    <property type="evidence" value="ECO:0007669"/>
    <property type="project" value="UniProtKB-UniRule"/>
</dbReference>
<dbReference type="GO" id="GO:0002161">
    <property type="term" value="F:aminoacyl-tRNA deacylase activity"/>
    <property type="evidence" value="ECO:0007669"/>
    <property type="project" value="TreeGrafter"/>
</dbReference>
<dbReference type="GO" id="GO:0005524">
    <property type="term" value="F:ATP binding"/>
    <property type="evidence" value="ECO:0007669"/>
    <property type="project" value="UniProtKB-UniRule"/>
</dbReference>
<dbReference type="GO" id="GO:0000049">
    <property type="term" value="F:tRNA binding"/>
    <property type="evidence" value="ECO:0007669"/>
    <property type="project" value="UniProtKB-KW"/>
</dbReference>
<dbReference type="GO" id="GO:0008270">
    <property type="term" value="F:zinc ion binding"/>
    <property type="evidence" value="ECO:0007669"/>
    <property type="project" value="UniProtKB-UniRule"/>
</dbReference>
<dbReference type="GO" id="GO:0006419">
    <property type="term" value="P:alanyl-tRNA aminoacylation"/>
    <property type="evidence" value="ECO:0007669"/>
    <property type="project" value="UniProtKB-UniRule"/>
</dbReference>
<dbReference type="GO" id="GO:0045892">
    <property type="term" value="P:negative regulation of DNA-templated transcription"/>
    <property type="evidence" value="ECO:0007669"/>
    <property type="project" value="TreeGrafter"/>
</dbReference>
<dbReference type="CDD" id="cd00673">
    <property type="entry name" value="AlaRS_core"/>
    <property type="match status" value="1"/>
</dbReference>
<dbReference type="FunFam" id="2.40.30.130:FF:000001">
    <property type="entry name" value="Alanine--tRNA ligase"/>
    <property type="match status" value="1"/>
</dbReference>
<dbReference type="FunFam" id="3.10.310.40:FF:000001">
    <property type="entry name" value="Alanine--tRNA ligase"/>
    <property type="match status" value="1"/>
</dbReference>
<dbReference type="FunFam" id="3.30.54.20:FF:000001">
    <property type="entry name" value="Alanine--tRNA ligase"/>
    <property type="match status" value="1"/>
</dbReference>
<dbReference type="FunFam" id="3.30.930.10:FF:000004">
    <property type="entry name" value="Alanine--tRNA ligase"/>
    <property type="match status" value="1"/>
</dbReference>
<dbReference type="FunFam" id="3.30.980.10:FF:000004">
    <property type="entry name" value="Alanine--tRNA ligase, cytoplasmic"/>
    <property type="match status" value="1"/>
</dbReference>
<dbReference type="Gene3D" id="2.40.30.130">
    <property type="match status" value="1"/>
</dbReference>
<dbReference type="Gene3D" id="3.10.310.40">
    <property type="match status" value="1"/>
</dbReference>
<dbReference type="Gene3D" id="3.30.54.20">
    <property type="match status" value="1"/>
</dbReference>
<dbReference type="Gene3D" id="6.10.250.550">
    <property type="match status" value="1"/>
</dbReference>
<dbReference type="Gene3D" id="3.30.930.10">
    <property type="entry name" value="Bira Bifunctional Protein, Domain 2"/>
    <property type="match status" value="1"/>
</dbReference>
<dbReference type="Gene3D" id="3.30.980.10">
    <property type="entry name" value="Threonyl-trna Synthetase, Chain A, domain 2"/>
    <property type="match status" value="1"/>
</dbReference>
<dbReference type="HAMAP" id="MF_00036_B">
    <property type="entry name" value="Ala_tRNA_synth_B"/>
    <property type="match status" value="1"/>
</dbReference>
<dbReference type="InterPro" id="IPR045864">
    <property type="entry name" value="aa-tRNA-synth_II/BPL/LPL"/>
</dbReference>
<dbReference type="InterPro" id="IPR002318">
    <property type="entry name" value="Ala-tRNA-lgiase_IIc"/>
</dbReference>
<dbReference type="InterPro" id="IPR018162">
    <property type="entry name" value="Ala-tRNA-ligase_IIc_anticod-bd"/>
</dbReference>
<dbReference type="InterPro" id="IPR018165">
    <property type="entry name" value="Ala-tRNA-synth_IIc_core"/>
</dbReference>
<dbReference type="InterPro" id="IPR018164">
    <property type="entry name" value="Ala-tRNA-synth_IIc_N"/>
</dbReference>
<dbReference type="InterPro" id="IPR050058">
    <property type="entry name" value="Ala-tRNA_ligase"/>
</dbReference>
<dbReference type="InterPro" id="IPR023033">
    <property type="entry name" value="Ala_tRNA_ligase_euk/bac"/>
</dbReference>
<dbReference type="InterPro" id="IPR003156">
    <property type="entry name" value="DHHA1_dom"/>
</dbReference>
<dbReference type="InterPro" id="IPR018163">
    <property type="entry name" value="Thr/Ala-tRNA-synth_IIc_edit"/>
</dbReference>
<dbReference type="InterPro" id="IPR009000">
    <property type="entry name" value="Transl_B-barrel_sf"/>
</dbReference>
<dbReference type="InterPro" id="IPR012947">
    <property type="entry name" value="tRNA_SAD"/>
</dbReference>
<dbReference type="NCBIfam" id="TIGR00344">
    <property type="entry name" value="alaS"/>
    <property type="match status" value="1"/>
</dbReference>
<dbReference type="PANTHER" id="PTHR11777:SF9">
    <property type="entry name" value="ALANINE--TRNA LIGASE, CYTOPLASMIC"/>
    <property type="match status" value="1"/>
</dbReference>
<dbReference type="PANTHER" id="PTHR11777">
    <property type="entry name" value="ALANYL-TRNA SYNTHETASE"/>
    <property type="match status" value="1"/>
</dbReference>
<dbReference type="Pfam" id="PF02272">
    <property type="entry name" value="DHHA1"/>
    <property type="match status" value="1"/>
</dbReference>
<dbReference type="Pfam" id="PF01411">
    <property type="entry name" value="tRNA-synt_2c"/>
    <property type="match status" value="1"/>
</dbReference>
<dbReference type="Pfam" id="PF07973">
    <property type="entry name" value="tRNA_SAD"/>
    <property type="match status" value="1"/>
</dbReference>
<dbReference type="PRINTS" id="PR00980">
    <property type="entry name" value="TRNASYNTHALA"/>
</dbReference>
<dbReference type="SMART" id="SM00863">
    <property type="entry name" value="tRNA_SAD"/>
    <property type="match status" value="1"/>
</dbReference>
<dbReference type="SUPFAM" id="SSF55681">
    <property type="entry name" value="Class II aaRS and biotin synthetases"/>
    <property type="match status" value="1"/>
</dbReference>
<dbReference type="SUPFAM" id="SSF101353">
    <property type="entry name" value="Putative anticodon-binding domain of alanyl-tRNA synthetase (AlaRS)"/>
    <property type="match status" value="1"/>
</dbReference>
<dbReference type="SUPFAM" id="SSF55186">
    <property type="entry name" value="ThrRS/AlaRS common domain"/>
    <property type="match status" value="1"/>
</dbReference>
<dbReference type="SUPFAM" id="SSF50447">
    <property type="entry name" value="Translation proteins"/>
    <property type="match status" value="1"/>
</dbReference>
<dbReference type="PROSITE" id="PS50860">
    <property type="entry name" value="AA_TRNA_LIGASE_II_ALA"/>
    <property type="match status" value="1"/>
</dbReference>
<proteinExistence type="inferred from homology"/>
<feature type="chain" id="PRO_0000075180" description="Alanine--tRNA ligase">
    <location>
        <begin position="1"/>
        <end position="874"/>
    </location>
</feature>
<feature type="binding site" evidence="1">
    <location>
        <position position="562"/>
    </location>
    <ligand>
        <name>Zn(2+)</name>
        <dbReference type="ChEBI" id="CHEBI:29105"/>
    </ligand>
</feature>
<feature type="binding site" evidence="1">
    <location>
        <position position="566"/>
    </location>
    <ligand>
        <name>Zn(2+)</name>
        <dbReference type="ChEBI" id="CHEBI:29105"/>
    </ligand>
</feature>
<feature type="binding site" evidence="1">
    <location>
        <position position="665"/>
    </location>
    <ligand>
        <name>Zn(2+)</name>
        <dbReference type="ChEBI" id="CHEBI:29105"/>
    </ligand>
</feature>
<feature type="binding site" evidence="1">
    <location>
        <position position="669"/>
    </location>
    <ligand>
        <name>Zn(2+)</name>
        <dbReference type="ChEBI" id="CHEBI:29105"/>
    </ligand>
</feature>
<evidence type="ECO:0000255" key="1">
    <source>
        <dbReference type="HAMAP-Rule" id="MF_00036"/>
    </source>
</evidence>
<evidence type="ECO:0000305" key="2"/>
<comment type="function">
    <text evidence="1">Catalyzes the attachment of alanine to tRNA(Ala) in a two-step reaction: alanine is first activated by ATP to form Ala-AMP and then transferred to the acceptor end of tRNA(Ala). Also edits incorrectly charged Ser-tRNA(Ala) and Gly-tRNA(Ala) via its editing domain.</text>
</comment>
<comment type="catalytic activity">
    <reaction evidence="1">
        <text>tRNA(Ala) + L-alanine + ATP = L-alanyl-tRNA(Ala) + AMP + diphosphate</text>
        <dbReference type="Rhea" id="RHEA:12540"/>
        <dbReference type="Rhea" id="RHEA-COMP:9657"/>
        <dbReference type="Rhea" id="RHEA-COMP:9923"/>
        <dbReference type="ChEBI" id="CHEBI:30616"/>
        <dbReference type="ChEBI" id="CHEBI:33019"/>
        <dbReference type="ChEBI" id="CHEBI:57972"/>
        <dbReference type="ChEBI" id="CHEBI:78442"/>
        <dbReference type="ChEBI" id="CHEBI:78497"/>
        <dbReference type="ChEBI" id="CHEBI:456215"/>
        <dbReference type="EC" id="6.1.1.7"/>
    </reaction>
</comment>
<comment type="cofactor">
    <cofactor evidence="1">
        <name>Zn(2+)</name>
        <dbReference type="ChEBI" id="CHEBI:29105"/>
    </cofactor>
    <text evidence="1">Binds 1 zinc ion per subunit.</text>
</comment>
<comment type="subcellular location">
    <subcellularLocation>
        <location evidence="1">Cytoplasm</location>
    </subcellularLocation>
</comment>
<comment type="domain">
    <text evidence="1">Consists of three domains; the N-terminal catalytic domain, the editing domain and the C-terminal C-Ala domain. The editing domain removes incorrectly charged amino acids, while the C-Ala domain, along with tRNA(Ala), serves as a bridge to cooperatively bring together the editing and aminoacylation centers thus stimulating deacylation of misacylated tRNAs.</text>
</comment>
<comment type="similarity">
    <text evidence="1">Belongs to the class-II aminoacyl-tRNA synthetase family.</text>
</comment>
<comment type="sequence caution" evidence="2">
    <conflict type="erroneous initiation">
        <sequence resource="EMBL-CDS" id="AAY38588"/>
    </conflict>
</comment>
<accession>Q4ZQI4</accession>
<name>SYA_PSEU2</name>
<sequence>MKSAEIREAFLGFFEEQGHTRVASSSLIPGNDPTLLFTNAGMNQFKDCFLGQEKRAYTRAVTSQKCVRAGGKHNDLENVGYTARHHTFFEMLGNFSFGDYFKRDAITYAWTFLTSEKWLNLPKEKLWVTVYATDDEAYDIWTKEIGVPAERMVRIGDNKGAPYASDNFWTMGDTGPCGPCSEIFFDHGPEIWGGPPGSPEEDGDRYIEIWNNVFMQFNRTADGVLHPLPAPSVDTGMGLERVSAVLQHVHSNYEIDLFQSLLAASAKAIGCSNDNQASLKVVADHIRSCGFLIADGVLPSNEGRGYVLRRIIRRACRHGNKLGAKGSFFYQIVAALVAEMGSAFPELVQQQSHIERVLKGEEEQFAKTLEQGLKILEQDLADLKGTVVPGEVVFKLYDTYGFPMDLTGDIARERNLTLDEAGFEREMDAQRVRARSASSFGMDYNSLVKVDVATQFTGYSATTGSASVVALYKEGQSVSHLNEGEEGVVILDITPFYAESGGQIGDSGFLQAGDARFDVSDTTKTGGAFLHHGVVASGSLSVGAQVETQVADEVRDATKLNHSATHLLHAALRQVLGEHVQQKGSLVDSQRLRFDFSHFEAIKAEQLRALEDIVNAEIRKNTEVMTEETDIDTAKKKGAMALFGEKYGDSVRVLSMGGEFSVELCGGIHASRTGDIALFKIVSEGGVAAGVRRIEAVTGAAALAWLNSAEDQLKEAATLVKGNRDNLLDKLTAVIERNRLLEKQLEQLQAKAASAAGDDLSSAALDVKGVKVLATRLDGQDGKALLALVDQLKNKLGRAVILLGSVHEDKVVLVAGVTKDLTGQLKAGDLMKQAAAAVGGKGGGRPDMAQGGGVDAGALDSALALAVPFVEQGI</sequence>
<protein>
    <recommendedName>
        <fullName evidence="1">Alanine--tRNA ligase</fullName>
        <ecNumber evidence="1">6.1.1.7</ecNumber>
    </recommendedName>
    <alternativeName>
        <fullName evidence="1">Alanyl-tRNA synthetase</fullName>
        <shortName evidence="1">AlaRS</shortName>
    </alternativeName>
</protein>
<keyword id="KW-0030">Aminoacyl-tRNA synthetase</keyword>
<keyword id="KW-0067">ATP-binding</keyword>
<keyword id="KW-0963">Cytoplasm</keyword>
<keyword id="KW-0436">Ligase</keyword>
<keyword id="KW-0479">Metal-binding</keyword>
<keyword id="KW-0547">Nucleotide-binding</keyword>
<keyword id="KW-0648">Protein biosynthesis</keyword>
<keyword id="KW-0694">RNA-binding</keyword>
<keyword id="KW-0820">tRNA-binding</keyword>
<keyword id="KW-0862">Zinc</keyword>
<reference key="1">
    <citation type="journal article" date="2005" name="Proc. Natl. Acad. Sci. U.S.A.">
        <title>Comparison of the complete genome sequences of Pseudomonas syringae pv. syringae B728a and pv. tomato DC3000.</title>
        <authorList>
            <person name="Feil H."/>
            <person name="Feil W.S."/>
            <person name="Chain P."/>
            <person name="Larimer F."/>
            <person name="Dibartolo G."/>
            <person name="Copeland A."/>
            <person name="Lykidis A."/>
            <person name="Trong S."/>
            <person name="Nolan M."/>
            <person name="Goltsman E."/>
            <person name="Thiel J."/>
            <person name="Malfatti S."/>
            <person name="Loper J.E."/>
            <person name="Lapidus A."/>
            <person name="Detter J.C."/>
            <person name="Land M."/>
            <person name="Richardson P.M."/>
            <person name="Kyrpides N.C."/>
            <person name="Ivanova N."/>
            <person name="Lindow S.E."/>
        </authorList>
    </citation>
    <scope>NUCLEOTIDE SEQUENCE [LARGE SCALE GENOMIC DNA]</scope>
    <source>
        <strain>B728a</strain>
    </source>
</reference>